<proteinExistence type="inferred from homology"/>
<evidence type="ECO:0000250" key="1"/>
<evidence type="ECO:0000255" key="2">
    <source>
        <dbReference type="PROSITE-ProRule" id="PRU00541"/>
    </source>
</evidence>
<evidence type="ECO:0000255" key="3">
    <source>
        <dbReference type="PROSITE-ProRule" id="PRU00542"/>
    </source>
</evidence>
<evidence type="ECO:0000256" key="4">
    <source>
        <dbReference type="SAM" id="MobiDB-lite"/>
    </source>
</evidence>
<evidence type="ECO:0000305" key="5"/>
<comment type="function">
    <text evidence="1">ATP-dependent RNA helicase which is a subunit of the eIF4F complex involved in cap recognition and is required for mRNA binding to ribosome. In the current model of translation initiation, eIF4A unwinds RNA secondary structures in the 5'-UTR of mRNAs which is necessary to allow efficient binding of the small ribosomal subunit, and subsequent scanning for the initiator codon (By similarity).</text>
</comment>
<comment type="catalytic activity">
    <reaction>
        <text>ATP + H2O = ADP + phosphate + H(+)</text>
        <dbReference type="Rhea" id="RHEA:13065"/>
        <dbReference type="ChEBI" id="CHEBI:15377"/>
        <dbReference type="ChEBI" id="CHEBI:15378"/>
        <dbReference type="ChEBI" id="CHEBI:30616"/>
        <dbReference type="ChEBI" id="CHEBI:43474"/>
        <dbReference type="ChEBI" id="CHEBI:456216"/>
        <dbReference type="EC" id="3.6.4.13"/>
    </reaction>
</comment>
<comment type="subunit">
    <text evidence="1">eIF4F is a multi-subunit complex, the composition of which varies with external and internal environmental conditions. It is composed of at least EIF4A, EIF4E and EIF4G (By similarity).</text>
</comment>
<comment type="similarity">
    <text evidence="5">Belongs to the DEAD box helicase family. eIF4A subfamily.</text>
</comment>
<name>IF4A_LEIIN</name>
<dbReference type="EC" id="3.6.4.13"/>
<dbReference type="EMBL" id="FR796433">
    <property type="protein sequence ID" value="CAM65230.1"/>
    <property type="molecule type" value="Genomic_DNA"/>
</dbReference>
<dbReference type="EMBL" id="FR796433">
    <property type="protein sequence ID" value="CAM65231.1"/>
    <property type="molecule type" value="Genomic_DNA"/>
</dbReference>
<dbReference type="RefSeq" id="XP_001462692.1">
    <property type="nucleotide sequence ID" value="XM_001462655.1"/>
</dbReference>
<dbReference type="RefSeq" id="XP_001462693.1">
    <property type="nucleotide sequence ID" value="XM_001462656.1"/>
</dbReference>
<dbReference type="SMR" id="A4HRK0"/>
<dbReference type="FunCoup" id="A4HRK0">
    <property type="interactions" value="376"/>
</dbReference>
<dbReference type="STRING" id="5671.A4HRK0"/>
<dbReference type="GeneID" id="5066116"/>
<dbReference type="GeneID" id="5066119"/>
<dbReference type="KEGG" id="lif:LINJ_01_0790"/>
<dbReference type="KEGG" id="lif:LINJ_01_0800"/>
<dbReference type="VEuPathDB" id="TriTrypDB:LINF_010012800"/>
<dbReference type="eggNOG" id="KOG0327">
    <property type="taxonomic scope" value="Eukaryota"/>
</dbReference>
<dbReference type="InParanoid" id="A4HRK0"/>
<dbReference type="OMA" id="FGCQALV"/>
<dbReference type="Proteomes" id="UP000008153">
    <property type="component" value="Chromosome 1"/>
</dbReference>
<dbReference type="GO" id="GO:0005829">
    <property type="term" value="C:cytosol"/>
    <property type="evidence" value="ECO:0007669"/>
    <property type="project" value="TreeGrafter"/>
</dbReference>
<dbReference type="GO" id="GO:0005524">
    <property type="term" value="F:ATP binding"/>
    <property type="evidence" value="ECO:0007669"/>
    <property type="project" value="UniProtKB-KW"/>
</dbReference>
<dbReference type="GO" id="GO:0016887">
    <property type="term" value="F:ATP hydrolysis activity"/>
    <property type="evidence" value="ECO:0007669"/>
    <property type="project" value="RHEA"/>
</dbReference>
<dbReference type="GO" id="GO:0003723">
    <property type="term" value="F:RNA binding"/>
    <property type="evidence" value="ECO:0007669"/>
    <property type="project" value="UniProtKB-KW"/>
</dbReference>
<dbReference type="GO" id="GO:0003724">
    <property type="term" value="F:RNA helicase activity"/>
    <property type="evidence" value="ECO:0007669"/>
    <property type="project" value="UniProtKB-EC"/>
</dbReference>
<dbReference type="GO" id="GO:0003743">
    <property type="term" value="F:translation initiation factor activity"/>
    <property type="evidence" value="ECO:0007669"/>
    <property type="project" value="UniProtKB-KW"/>
</dbReference>
<dbReference type="CDD" id="cd17939">
    <property type="entry name" value="DEADc_EIF4A"/>
    <property type="match status" value="1"/>
</dbReference>
<dbReference type="CDD" id="cd18787">
    <property type="entry name" value="SF2_C_DEAD"/>
    <property type="match status" value="1"/>
</dbReference>
<dbReference type="FunFam" id="3.40.50.300:FF:000849">
    <property type="entry name" value="ATP-dependent RNA helicase DBP5"/>
    <property type="match status" value="1"/>
</dbReference>
<dbReference type="FunFam" id="3.40.50.300:FF:000031">
    <property type="entry name" value="Eukaryotic initiation factor 4A-III"/>
    <property type="match status" value="1"/>
</dbReference>
<dbReference type="Gene3D" id="3.40.50.300">
    <property type="entry name" value="P-loop containing nucleotide triphosphate hydrolases"/>
    <property type="match status" value="2"/>
</dbReference>
<dbReference type="InterPro" id="IPR011545">
    <property type="entry name" value="DEAD/DEAH_box_helicase_dom"/>
</dbReference>
<dbReference type="InterPro" id="IPR050079">
    <property type="entry name" value="DEAD_box_RNA_helicase"/>
</dbReference>
<dbReference type="InterPro" id="IPR014001">
    <property type="entry name" value="Helicase_ATP-bd"/>
</dbReference>
<dbReference type="InterPro" id="IPR001650">
    <property type="entry name" value="Helicase_C-like"/>
</dbReference>
<dbReference type="InterPro" id="IPR027417">
    <property type="entry name" value="P-loop_NTPase"/>
</dbReference>
<dbReference type="InterPro" id="IPR000629">
    <property type="entry name" value="RNA-helicase_DEAD-box_CS"/>
</dbReference>
<dbReference type="InterPro" id="IPR014014">
    <property type="entry name" value="RNA_helicase_DEAD_Q_motif"/>
</dbReference>
<dbReference type="PANTHER" id="PTHR47959:SF1">
    <property type="entry name" value="ATP-DEPENDENT RNA HELICASE DBPA"/>
    <property type="match status" value="1"/>
</dbReference>
<dbReference type="PANTHER" id="PTHR47959">
    <property type="entry name" value="ATP-DEPENDENT RNA HELICASE RHLE-RELATED"/>
    <property type="match status" value="1"/>
</dbReference>
<dbReference type="Pfam" id="PF00270">
    <property type="entry name" value="DEAD"/>
    <property type="match status" value="1"/>
</dbReference>
<dbReference type="Pfam" id="PF00271">
    <property type="entry name" value="Helicase_C"/>
    <property type="match status" value="1"/>
</dbReference>
<dbReference type="SMART" id="SM00487">
    <property type="entry name" value="DEXDc"/>
    <property type="match status" value="1"/>
</dbReference>
<dbReference type="SMART" id="SM00490">
    <property type="entry name" value="HELICc"/>
    <property type="match status" value="1"/>
</dbReference>
<dbReference type="SUPFAM" id="SSF52540">
    <property type="entry name" value="P-loop containing nucleoside triphosphate hydrolases"/>
    <property type="match status" value="1"/>
</dbReference>
<dbReference type="PROSITE" id="PS00039">
    <property type="entry name" value="DEAD_ATP_HELICASE"/>
    <property type="match status" value="1"/>
</dbReference>
<dbReference type="PROSITE" id="PS51192">
    <property type="entry name" value="HELICASE_ATP_BIND_1"/>
    <property type="match status" value="1"/>
</dbReference>
<dbReference type="PROSITE" id="PS51194">
    <property type="entry name" value="HELICASE_CTER"/>
    <property type="match status" value="1"/>
</dbReference>
<dbReference type="PROSITE" id="PS51195">
    <property type="entry name" value="Q_MOTIF"/>
    <property type="match status" value="1"/>
</dbReference>
<feature type="chain" id="PRO_0000291642" description="Probable eukaryotic initiation factor 4A">
    <location>
        <begin position="1"/>
        <end position="403"/>
    </location>
</feature>
<feature type="domain" description="Helicase ATP-binding" evidence="2">
    <location>
        <begin position="57"/>
        <end position="230"/>
    </location>
</feature>
<feature type="domain" description="Helicase C-terminal" evidence="3">
    <location>
        <begin position="241"/>
        <end position="401"/>
    </location>
</feature>
<feature type="region of interest" description="Disordered" evidence="4">
    <location>
        <begin position="1"/>
        <end position="29"/>
    </location>
</feature>
<feature type="short sequence motif" description="Q motif">
    <location>
        <begin position="26"/>
        <end position="54"/>
    </location>
</feature>
<feature type="short sequence motif" description="DEAD box">
    <location>
        <begin position="178"/>
        <end position="181"/>
    </location>
</feature>
<feature type="binding site" evidence="2">
    <location>
        <begin position="70"/>
        <end position="77"/>
    </location>
    <ligand>
        <name>ATP</name>
        <dbReference type="ChEBI" id="CHEBI:30616"/>
    </ligand>
</feature>
<keyword id="KW-0067">ATP-binding</keyword>
<keyword id="KW-0347">Helicase</keyword>
<keyword id="KW-0378">Hydrolase</keyword>
<keyword id="KW-0396">Initiation factor</keyword>
<keyword id="KW-0547">Nucleotide-binding</keyword>
<keyword id="KW-0648">Protein biosynthesis</keyword>
<keyword id="KW-1185">Reference proteome</keyword>
<keyword id="KW-0694">RNA-binding</keyword>
<accession>A4HRK0</accession>
<organism>
    <name type="scientific">Leishmania infantum</name>
    <dbReference type="NCBI Taxonomy" id="5671"/>
    <lineage>
        <taxon>Eukaryota</taxon>
        <taxon>Discoba</taxon>
        <taxon>Euglenozoa</taxon>
        <taxon>Kinetoplastea</taxon>
        <taxon>Metakinetoplastina</taxon>
        <taxon>Trypanosomatida</taxon>
        <taxon>Trypanosomatidae</taxon>
        <taxon>Leishmaniinae</taxon>
        <taxon>Leishmania</taxon>
    </lineage>
</organism>
<gene>
    <name type="ORF">LinJ01.0780</name>
    <name type="ORF">LinJ_01_0790</name>
</gene>
<gene>
    <name type="ORF">LinJ01.0790</name>
    <name type="ORF">LinJ_01_0800</name>
</gene>
<sequence>MAQNDKIAPQDQDSFLDDQPGVRPIPSFDDMPLHQNLLRGIYSYGFEKPSSIQQRAIAPFTRGGDIIAQAQSGTGKTGAFSIGLLQRLDFRHNLIQGLVLSPTRELALQTAEVISRIGEFLSNSSKFCETFVGGTRVQDDLRKLQAGVIVAVGTPGRVSDVIKRGALRTESLRVLVLDEADEMLSQGFADQIYEIFRFLPKDIQVALFSATMPEEVLELTKKFMRDPVRILVKRESLTLEGIKQFFIAVEEEHKLDTLMDLYETVSIAQSVIFANTRRKVDWIAEKLNQSNHTVSSMHAEMPKSDRERVMNTFRSGSSRVLVTTDLVARGIDVHHVNIVINFDLPTNKENYLHRIGRGGRYGRKGVAINFVTEKDVELLHEIEAHYHTQIDELPVDFAAYLGE</sequence>
<reference key="1">
    <citation type="journal article" date="2007" name="Nat. Genet.">
        <title>Comparative genomic analysis of three Leishmania species that cause diverse human disease.</title>
        <authorList>
            <person name="Peacock C.S."/>
            <person name="Seeger K."/>
            <person name="Harris D."/>
            <person name="Murphy L."/>
            <person name="Ruiz J.C."/>
            <person name="Quail M.A."/>
            <person name="Peters N."/>
            <person name="Adlem E."/>
            <person name="Tivey A."/>
            <person name="Aslett M."/>
            <person name="Kerhornou A."/>
            <person name="Ivens A."/>
            <person name="Fraser A."/>
            <person name="Rajandream M.-A."/>
            <person name="Carver T."/>
            <person name="Norbertczak H."/>
            <person name="Chillingworth T."/>
            <person name="Hance Z."/>
            <person name="Jagels K."/>
            <person name="Moule S."/>
            <person name="Ormond D."/>
            <person name="Rutter S."/>
            <person name="Sqaures R."/>
            <person name="Whitehead S."/>
            <person name="Rabbinowitsch E."/>
            <person name="Arrowsmith C."/>
            <person name="White B."/>
            <person name="Thurston S."/>
            <person name="Bringaud F."/>
            <person name="Baldauf S.L."/>
            <person name="Faulconbridge A."/>
            <person name="Jeffares D."/>
            <person name="Depledge D.P."/>
            <person name="Oyola S.O."/>
            <person name="Hilley J.D."/>
            <person name="Brito L.O."/>
            <person name="Tosi L.R.O."/>
            <person name="Barrell B."/>
            <person name="Cruz A.K."/>
            <person name="Mottram J.C."/>
            <person name="Smith D.F."/>
            <person name="Berriman M."/>
        </authorList>
    </citation>
    <scope>NUCLEOTIDE SEQUENCE [LARGE SCALE GENOMIC DNA]</scope>
    <source>
        <strain>JPCM5</strain>
    </source>
</reference>
<protein>
    <recommendedName>
        <fullName>Probable eukaryotic initiation factor 4A</fullName>
        <shortName>eIF-4A</shortName>
        <ecNumber>3.6.4.13</ecNumber>
    </recommendedName>
    <alternativeName>
        <fullName>ATP-dependent RNA helicase eIF4A</fullName>
    </alternativeName>
</protein>